<organism>
    <name type="scientific">Pinus strobus</name>
    <name type="common">Eastern white pine</name>
    <dbReference type="NCBI Taxonomy" id="3348"/>
    <lineage>
        <taxon>Eukaryota</taxon>
        <taxon>Viridiplantae</taxon>
        <taxon>Streptophyta</taxon>
        <taxon>Embryophyta</taxon>
        <taxon>Tracheophyta</taxon>
        <taxon>Spermatophyta</taxon>
        <taxon>Pinopsida</taxon>
        <taxon>Pinidae</taxon>
        <taxon>Conifers I</taxon>
        <taxon>Pinales</taxon>
        <taxon>Pinaceae</taxon>
        <taxon>Pinus</taxon>
        <taxon>Pinus subgen. Strobus</taxon>
    </lineage>
</organism>
<sequence>MSVGMGVDLEAFRKSQRADGFASILAIGTANPPNVVDQSTYPDYYFRNTNNEDNTDLKDKFKRICERSAIKKRHMYLTEEILKKNPELCAFLEVPSLDTRQAMLAVEVPRLGKEAAEKAIEEWGQPKSRITHLIFCTTTTPDLPGADFEVAKLLGLHPSVKRVGVFQHGCFAGGTVLRLAKDLAENNRGARVLVVCSENTAVTFRGPSETHLDGLVGLALFGDGAAALIVGADPIPQVEKPCFEIVWTAQTVVPNSDGAISGKLREVGLTFQLKGAVPDLISTNIEKCLVEAFSQFNISDWNQLFWIAHPGGRAILDQVEASLNLDPTKLRATRHVMSEYGNMSSACVHFILDETRKASRQNGCSTSGGGFQMGVLFGFGPGLTVETVVLKSIPFP</sequence>
<reference key="1">
    <citation type="journal article" date="1995" name="FEBS Lett.">
        <title>Molecular and enzymatic characterization of two stilbene synthases from Eastern white pine (Pinus strobus). A single Arg/His difference determines the activity and the pH dependence of the enzymes.</title>
        <authorList>
            <person name="Raiber S."/>
            <person name="Schroeder G."/>
            <person name="Schroeder J."/>
        </authorList>
    </citation>
    <scope>NUCLEOTIDE SEQUENCE [MRNA]</scope>
    <scope>FUNCTION</scope>
    <scope>CATALYTIC ACTIVITY</scope>
    <scope>BIOPHYSICOCHEMICAL PROPERTIES</scope>
</reference>
<evidence type="ECO:0000250" key="1"/>
<evidence type="ECO:0000255" key="2">
    <source>
        <dbReference type="PROSITE-ProRule" id="PRU10023"/>
    </source>
</evidence>
<evidence type="ECO:0000269" key="3">
    <source>
    </source>
</evidence>
<evidence type="ECO:0000303" key="4">
    <source>
    </source>
</evidence>
<evidence type="ECO:0000305" key="5"/>
<keyword id="KW-0012">Acyltransferase</keyword>
<keyword id="KW-0963">Cytoplasm</keyword>
<keyword id="KW-0346">Stress response</keyword>
<keyword id="KW-0808">Transferase</keyword>
<accession>P48408</accession>
<name>DPS2_PINST</name>
<protein>
    <recommendedName>
        <fullName evidence="4">Pinosylvin synthase 2</fullName>
        <ecNumber evidence="3">2.3.1.146</ecNumber>
    </recommendedName>
    <alternativeName>
        <fullName>Dihydropinosylvin synthase 2</fullName>
    </alternativeName>
    <alternativeName>
        <fullName evidence="4">Stilbene synthase 2</fullName>
        <shortName>STS 2</shortName>
    </alternativeName>
</protein>
<dbReference type="EC" id="2.3.1.146" evidence="3"/>
<dbReference type="EMBL" id="Z46915">
    <property type="protein sequence ID" value="CAA87013.1"/>
    <property type="molecule type" value="mRNA"/>
</dbReference>
<dbReference type="PIR" id="S68773">
    <property type="entry name" value="S68773"/>
</dbReference>
<dbReference type="SMR" id="P48408"/>
<dbReference type="KEGG" id="ag:CAA87013"/>
<dbReference type="BioCyc" id="MetaCyc:MONOMER-11733"/>
<dbReference type="UniPathway" id="UPA00373"/>
<dbReference type="GO" id="GO:0005737">
    <property type="term" value="C:cytoplasm"/>
    <property type="evidence" value="ECO:0007669"/>
    <property type="project" value="UniProtKB-SubCell"/>
</dbReference>
<dbReference type="GO" id="GO:0050198">
    <property type="term" value="F:pinosylvin synthase activity"/>
    <property type="evidence" value="ECO:0007669"/>
    <property type="project" value="UniProtKB-EC"/>
</dbReference>
<dbReference type="GO" id="GO:0030639">
    <property type="term" value="P:polyketide biosynthetic process"/>
    <property type="evidence" value="ECO:0007669"/>
    <property type="project" value="TreeGrafter"/>
</dbReference>
<dbReference type="CDD" id="cd00831">
    <property type="entry name" value="CHS_like"/>
    <property type="match status" value="1"/>
</dbReference>
<dbReference type="FunFam" id="3.40.47.10:FF:000014">
    <property type="entry name" value="Chalcone synthase 1"/>
    <property type="match status" value="1"/>
</dbReference>
<dbReference type="FunFam" id="3.40.47.10:FF:000025">
    <property type="entry name" value="Chalcone synthase 2"/>
    <property type="match status" value="1"/>
</dbReference>
<dbReference type="Gene3D" id="3.40.47.10">
    <property type="match status" value="2"/>
</dbReference>
<dbReference type="InterPro" id="IPR012328">
    <property type="entry name" value="Chalcone/stilbene_synt_C"/>
</dbReference>
<dbReference type="InterPro" id="IPR001099">
    <property type="entry name" value="Chalcone/stilbene_synt_N"/>
</dbReference>
<dbReference type="InterPro" id="IPR018088">
    <property type="entry name" value="Chalcone/stilbene_synthase_AS"/>
</dbReference>
<dbReference type="InterPro" id="IPR011141">
    <property type="entry name" value="Polyketide_synthase_type-III"/>
</dbReference>
<dbReference type="InterPro" id="IPR016039">
    <property type="entry name" value="Thiolase-like"/>
</dbReference>
<dbReference type="PANTHER" id="PTHR11877:SF14">
    <property type="entry name" value="CHALCONE SYNTHASE"/>
    <property type="match status" value="1"/>
</dbReference>
<dbReference type="PANTHER" id="PTHR11877">
    <property type="entry name" value="HYDROXYMETHYLGLUTARYL-COA SYNTHASE"/>
    <property type="match status" value="1"/>
</dbReference>
<dbReference type="Pfam" id="PF02797">
    <property type="entry name" value="Chal_sti_synt_C"/>
    <property type="match status" value="1"/>
</dbReference>
<dbReference type="Pfam" id="PF00195">
    <property type="entry name" value="Chal_sti_synt_N"/>
    <property type="match status" value="1"/>
</dbReference>
<dbReference type="PIRSF" id="PIRSF000451">
    <property type="entry name" value="PKS_III"/>
    <property type="match status" value="1"/>
</dbReference>
<dbReference type="SUPFAM" id="SSF53901">
    <property type="entry name" value="Thiolase-like"/>
    <property type="match status" value="2"/>
</dbReference>
<dbReference type="PROSITE" id="PS00441">
    <property type="entry name" value="CHALCONE_SYNTH"/>
    <property type="match status" value="1"/>
</dbReference>
<comment type="function">
    <text evidence="3">Catalyzes the production of pinosylvin from cinnamoyl-CoA and malonyl-CoA, and dihydropinosylvin from dihydrocinnamoyl-CoA.</text>
</comment>
<comment type="catalytic activity">
    <reaction evidence="3">
        <text>(E)-cinnamoyl-CoA + 3 malonyl-CoA + 3 H(+) = (E)-pinosylvin + 4 CO2 + 4 CoA</text>
        <dbReference type="Rhea" id="RHEA:12552"/>
        <dbReference type="ChEBI" id="CHEBI:15378"/>
        <dbReference type="ChEBI" id="CHEBI:16526"/>
        <dbReference type="ChEBI" id="CHEBI:17323"/>
        <dbReference type="ChEBI" id="CHEBI:57252"/>
        <dbReference type="ChEBI" id="CHEBI:57287"/>
        <dbReference type="ChEBI" id="CHEBI:57384"/>
        <dbReference type="EC" id="2.3.1.146"/>
    </reaction>
</comment>
<comment type="catalytic activity">
    <reaction evidence="3">
        <text>3-phenylpropanoyl-CoA + 3 malonyl-CoA + 3 H(+) = dihydropinosylvin + 4 CO2 + 4 CoA</text>
        <dbReference type="Rhea" id="RHEA:46096"/>
        <dbReference type="ChEBI" id="CHEBI:4579"/>
        <dbReference type="ChEBI" id="CHEBI:15378"/>
        <dbReference type="ChEBI" id="CHEBI:16526"/>
        <dbReference type="ChEBI" id="CHEBI:57287"/>
        <dbReference type="ChEBI" id="CHEBI:57384"/>
        <dbReference type="ChEBI" id="CHEBI:85676"/>
    </reaction>
</comment>
<comment type="biophysicochemical properties">
    <kinetics>
        <KM evidence="3">3.6 uM for cinnamoyl-CoA</KM>
        <KM evidence="3">22 uM for dihydrocinnamoyl-CoA</KM>
    </kinetics>
    <phDependence>
        <text evidence="3">Optimum pH is 6-7.</text>
    </phDependence>
</comment>
<comment type="pathway">
    <text>Phytoalexin biosynthesis; pinosylvin biosynthesis.</text>
</comment>
<comment type="subunit">
    <text evidence="1">Homodimer.</text>
</comment>
<comment type="subcellular location">
    <subcellularLocation>
        <location>Cytoplasm</location>
    </subcellularLocation>
</comment>
<comment type="induction">
    <text>By stress.</text>
</comment>
<comment type="similarity">
    <text evidence="5">Belongs to the thiolase-like superfamily. Chalcone/stilbene synthases family.</text>
</comment>
<feature type="chain" id="PRO_0000216077" description="Pinosylvin synthase 2">
    <location>
        <begin position="1"/>
        <end position="396"/>
    </location>
</feature>
<feature type="active site" evidence="2">
    <location>
        <position position="170"/>
    </location>
</feature>
<feature type="binding site" evidence="1">
    <location>
        <begin position="60"/>
        <end position="63"/>
    </location>
    <ligand>
        <name>substrate</name>
    </ligand>
</feature>
<feature type="binding site" evidence="1">
    <location>
        <position position="273"/>
    </location>
    <ligand>
        <name>substrate</name>
    </ligand>
</feature>
<feature type="binding site" evidence="1">
    <location>
        <begin position="311"/>
        <end position="313"/>
    </location>
    <ligand>
        <name>substrate</name>
    </ligand>
</feature>
<feature type="site" description="Responsible for the different enzymatic properties of STS1 and STS2">
    <location>
        <position position="313"/>
    </location>
</feature>
<proteinExistence type="evidence at protein level"/>
<gene>
    <name evidence="4" type="primary">STS2</name>
</gene>